<sequence length="469" mass="52409">MDESVDRVLAGKYPAKAHAKRVAARIRELGYGESGVIYLEGQKTQMIEDNDGSMPFRQRRNFFYLSGCPLPDSYLTYNIEEDHLTLFIPPIDEDSVIWSGLPLSPDEALEMYDVDAVLLTTDVNTSLAHFCSVKKGKKVFAIADQVSPHITFLPFQETDFDVLKRAAEESRVVKDTYEIALLRRANEISTKAHVAVIKAARSAANERELEAIFIATCMSYGCREQSYHPIFASGTNAATLHYQNNNEDLVDKTTGEKRLNMLVDAGGEYRTYCADITRVVPLSGKFSAESRQIYDIVLDMQMTSLAMIRAGVMWEDVHSNSHRVAIRGLLKLGILRGTEEELFDKGISVAFFPHGVGHYLGMDTHDTGGNPNYKDENPKFKYLRLRGTLACGAVVTVEPGIYFCRFIIDPYLASPELGKYIDTNVLERYWNVGGVRIEDNVVVTQNGHDNLTAAPKIPEEIEKLVAAAQ</sequence>
<reference key="1">
    <citation type="submission" date="2009-02" db="EMBL/GenBank/DDBJ databases">
        <title>The genome sequence of Ajellomyces capsulatus strain G186AR.</title>
        <authorList>
            <person name="Champion M."/>
            <person name="Cuomo C.A."/>
            <person name="Ma L.-J."/>
            <person name="Henn M.R."/>
            <person name="Sil A."/>
            <person name="Goldman B."/>
            <person name="Young S.K."/>
            <person name="Kodira C.D."/>
            <person name="Zeng Q."/>
            <person name="Koehrsen M."/>
            <person name="Alvarado L."/>
            <person name="Berlin A."/>
            <person name="Borenstein D."/>
            <person name="Chen Z."/>
            <person name="Engels R."/>
            <person name="Freedman E."/>
            <person name="Gellesch M."/>
            <person name="Goldberg J."/>
            <person name="Griggs A."/>
            <person name="Gujja S."/>
            <person name="Heiman D."/>
            <person name="Hepburn T."/>
            <person name="Howarth C."/>
            <person name="Jen D."/>
            <person name="Larson L."/>
            <person name="Lewis B."/>
            <person name="Mehta T."/>
            <person name="Park D."/>
            <person name="Pearson M."/>
            <person name="Roberts A."/>
            <person name="Saif S."/>
            <person name="Shea T."/>
            <person name="Shenoy N."/>
            <person name="Sisk P."/>
            <person name="Stolte C."/>
            <person name="Sykes S."/>
            <person name="Walk T."/>
            <person name="White J."/>
            <person name="Yandava C."/>
            <person name="Klein B."/>
            <person name="McEwen J.G."/>
            <person name="Puccia R."/>
            <person name="Goldman G.H."/>
            <person name="Felipe M.S."/>
            <person name="Nino-Vega G."/>
            <person name="San-Blas G."/>
            <person name="Taylor J."/>
            <person name="Mendoza L."/>
            <person name="Galagan J.E."/>
            <person name="Nusbaum C."/>
            <person name="Birren B.W."/>
        </authorList>
    </citation>
    <scope>NUCLEOTIDE SEQUENCE [LARGE SCALE GENOMIC DNA]</scope>
    <source>
        <strain>G186AR / H82 / ATCC MYA-2454 / RMSCC 2432</strain>
    </source>
</reference>
<name>AMPP3_AJECG</name>
<organism>
    <name type="scientific">Ajellomyces capsulatus (strain G186AR / H82 / ATCC MYA-2454 / RMSCC 2432)</name>
    <name type="common">Darling's disease fungus</name>
    <name type="synonym">Histoplasma capsulatum</name>
    <dbReference type="NCBI Taxonomy" id="447093"/>
    <lineage>
        <taxon>Eukaryota</taxon>
        <taxon>Fungi</taxon>
        <taxon>Dikarya</taxon>
        <taxon>Ascomycota</taxon>
        <taxon>Pezizomycotina</taxon>
        <taxon>Eurotiomycetes</taxon>
        <taxon>Eurotiomycetidae</taxon>
        <taxon>Onygenales</taxon>
        <taxon>Ajellomycetaceae</taxon>
        <taxon>Histoplasma</taxon>
    </lineage>
</organism>
<protein>
    <recommendedName>
        <fullName>Probable Xaa-Pro aminopeptidase PEPP</fullName>
        <ecNumber>3.4.11.9</ecNumber>
    </recommendedName>
    <alternativeName>
        <fullName>Aminoacylproline aminopeptidase</fullName>
    </alternativeName>
    <alternativeName>
        <fullName>Prolidase</fullName>
    </alternativeName>
</protein>
<proteinExistence type="inferred from homology"/>
<evidence type="ECO:0000250" key="1"/>
<evidence type="ECO:0000305" key="2"/>
<keyword id="KW-0031">Aminopeptidase</keyword>
<keyword id="KW-0378">Hydrolase</keyword>
<keyword id="KW-0464">Manganese</keyword>
<keyword id="KW-0479">Metal-binding</keyword>
<keyword id="KW-0482">Metalloprotease</keyword>
<keyword id="KW-0645">Protease</keyword>
<keyword id="KW-1185">Reference proteome</keyword>
<comment type="function">
    <text evidence="1">Catalyzes the removal of a penultimate prolyl residue from the N-termini of peptides.</text>
</comment>
<comment type="catalytic activity">
    <reaction>
        <text>Release of any N-terminal amino acid, including proline, that is linked to proline, even from a dipeptide or tripeptide.</text>
        <dbReference type="EC" id="3.4.11.9"/>
    </reaction>
</comment>
<comment type="cofactor">
    <cofactor evidence="1">
        <name>Mn(2+)</name>
        <dbReference type="ChEBI" id="CHEBI:29035"/>
    </cofactor>
    <text evidence="1">Binds 2 manganese ions per subunit.</text>
</comment>
<comment type="similarity">
    <text evidence="2">Belongs to the peptidase M24B family.</text>
</comment>
<gene>
    <name type="primary">PEPP</name>
    <name type="ORF">HCBG_02207</name>
</gene>
<accession>C0NIF0</accession>
<dbReference type="EC" id="3.4.11.9"/>
<dbReference type="EMBL" id="GG663365">
    <property type="protein sequence ID" value="EEH08670.1"/>
    <property type="molecule type" value="Genomic_DNA"/>
</dbReference>
<dbReference type="SMR" id="C0NIF0"/>
<dbReference type="FunCoup" id="C0NIF0">
    <property type="interactions" value="391"/>
</dbReference>
<dbReference type="STRING" id="447093.C0NIF0"/>
<dbReference type="VEuPathDB" id="FungiDB:I7I50_10969"/>
<dbReference type="HOGENOM" id="CLU_017266_1_2_1"/>
<dbReference type="InParanoid" id="C0NIF0"/>
<dbReference type="Proteomes" id="UP000001631">
    <property type="component" value="Unassembled WGS sequence"/>
</dbReference>
<dbReference type="GO" id="GO:0030145">
    <property type="term" value="F:manganese ion binding"/>
    <property type="evidence" value="ECO:0007669"/>
    <property type="project" value="InterPro"/>
</dbReference>
<dbReference type="GO" id="GO:0070006">
    <property type="term" value="F:metalloaminopeptidase activity"/>
    <property type="evidence" value="ECO:0007669"/>
    <property type="project" value="InterPro"/>
</dbReference>
<dbReference type="GO" id="GO:0006508">
    <property type="term" value="P:proteolysis"/>
    <property type="evidence" value="ECO:0007669"/>
    <property type="project" value="UniProtKB-KW"/>
</dbReference>
<dbReference type="CDD" id="cd01087">
    <property type="entry name" value="Prolidase"/>
    <property type="match status" value="1"/>
</dbReference>
<dbReference type="FunFam" id="3.90.230.10:FF:000002">
    <property type="entry name" value="Xaa-Pro aminopeptidase 3"/>
    <property type="match status" value="1"/>
</dbReference>
<dbReference type="Gene3D" id="3.90.230.10">
    <property type="entry name" value="Creatinase/methionine aminopeptidase superfamily"/>
    <property type="match status" value="1"/>
</dbReference>
<dbReference type="Gene3D" id="3.40.350.10">
    <property type="entry name" value="Creatinase/prolidase N-terminal domain"/>
    <property type="match status" value="1"/>
</dbReference>
<dbReference type="InterPro" id="IPR007865">
    <property type="entry name" value="Aminopep_P_N"/>
</dbReference>
<dbReference type="InterPro" id="IPR029149">
    <property type="entry name" value="Creatin/AminoP/Spt16_N"/>
</dbReference>
<dbReference type="InterPro" id="IPR036005">
    <property type="entry name" value="Creatinase/aminopeptidase-like"/>
</dbReference>
<dbReference type="InterPro" id="IPR000994">
    <property type="entry name" value="Pept_M24"/>
</dbReference>
<dbReference type="InterPro" id="IPR052433">
    <property type="entry name" value="X-Pro_dipept-like"/>
</dbReference>
<dbReference type="PANTHER" id="PTHR43226">
    <property type="entry name" value="XAA-PRO AMINOPEPTIDASE 3"/>
    <property type="match status" value="1"/>
</dbReference>
<dbReference type="PANTHER" id="PTHR43226:SF1">
    <property type="entry name" value="XAA-PRO DIPEPTIDASE"/>
    <property type="match status" value="1"/>
</dbReference>
<dbReference type="Pfam" id="PF05195">
    <property type="entry name" value="AMP_N"/>
    <property type="match status" value="1"/>
</dbReference>
<dbReference type="Pfam" id="PF00557">
    <property type="entry name" value="Peptidase_M24"/>
    <property type="match status" value="1"/>
</dbReference>
<dbReference type="SMART" id="SM01011">
    <property type="entry name" value="AMP_N"/>
    <property type="match status" value="1"/>
</dbReference>
<dbReference type="SUPFAM" id="SSF55920">
    <property type="entry name" value="Creatinase/aminopeptidase"/>
    <property type="match status" value="1"/>
</dbReference>
<dbReference type="SUPFAM" id="SSF53092">
    <property type="entry name" value="Creatinase/prolidase N-terminal domain"/>
    <property type="match status" value="1"/>
</dbReference>
<feature type="chain" id="PRO_0000411858" description="Probable Xaa-Pro aminopeptidase PEPP">
    <location>
        <begin position="1"/>
        <end position="469"/>
    </location>
</feature>
<feature type="binding site" evidence="1">
    <location>
        <position position="264"/>
    </location>
    <ligand>
        <name>Mn(2+)</name>
        <dbReference type="ChEBI" id="CHEBI:29035"/>
        <label>2</label>
    </ligand>
</feature>
<feature type="binding site" evidence="1">
    <location>
        <position position="275"/>
    </location>
    <ligand>
        <name>Mn(2+)</name>
        <dbReference type="ChEBI" id="CHEBI:29035"/>
        <label>1</label>
    </ligand>
</feature>
<feature type="binding site" evidence="1">
    <location>
        <position position="275"/>
    </location>
    <ligand>
        <name>Mn(2+)</name>
        <dbReference type="ChEBI" id="CHEBI:29035"/>
        <label>2</label>
    </ligand>
</feature>
<feature type="binding site" evidence="1">
    <location>
        <position position="398"/>
    </location>
    <ligand>
        <name>Mn(2+)</name>
        <dbReference type="ChEBI" id="CHEBI:29035"/>
        <label>1</label>
    </ligand>
</feature>
<feature type="binding site" evidence="1">
    <location>
        <position position="438"/>
    </location>
    <ligand>
        <name>Mn(2+)</name>
        <dbReference type="ChEBI" id="CHEBI:29035"/>
        <label>1</label>
    </ligand>
</feature>
<feature type="binding site" evidence="1">
    <location>
        <position position="438"/>
    </location>
    <ligand>
        <name>Mn(2+)</name>
        <dbReference type="ChEBI" id="CHEBI:29035"/>
        <label>2</label>
    </ligand>
</feature>